<feature type="chain" id="PRO_0000302012" description="Pre-mRNA-splicing factor CWC22 homolog">
    <location>
        <begin position="1"/>
        <end position="897"/>
    </location>
</feature>
<feature type="domain" description="MIF4G" evidence="2">
    <location>
        <begin position="194"/>
        <end position="382"/>
    </location>
</feature>
<feature type="domain" description="MI" evidence="2">
    <location>
        <begin position="485"/>
        <end position="601"/>
    </location>
</feature>
<feature type="region of interest" description="Disordered" evidence="3">
    <location>
        <begin position="1"/>
        <end position="155"/>
    </location>
</feature>
<feature type="region of interest" description="Disordered" evidence="3">
    <location>
        <begin position="444"/>
        <end position="472"/>
    </location>
</feature>
<feature type="region of interest" description="Disordered" evidence="3">
    <location>
        <begin position="689"/>
        <end position="897"/>
    </location>
</feature>
<feature type="compositionally biased region" description="Polar residues" evidence="3">
    <location>
        <begin position="1"/>
        <end position="10"/>
    </location>
</feature>
<feature type="compositionally biased region" description="Basic and acidic residues" evidence="3">
    <location>
        <begin position="36"/>
        <end position="54"/>
    </location>
</feature>
<feature type="compositionally biased region" description="Basic and acidic residues" evidence="3">
    <location>
        <begin position="93"/>
        <end position="107"/>
    </location>
</feature>
<feature type="compositionally biased region" description="Basic and acidic residues" evidence="3">
    <location>
        <begin position="131"/>
        <end position="155"/>
    </location>
</feature>
<feature type="compositionally biased region" description="Acidic residues" evidence="3">
    <location>
        <begin position="447"/>
        <end position="466"/>
    </location>
</feature>
<feature type="compositionally biased region" description="Low complexity" evidence="3">
    <location>
        <begin position="689"/>
        <end position="710"/>
    </location>
</feature>
<feature type="compositionally biased region" description="Low complexity" evidence="3">
    <location>
        <begin position="720"/>
        <end position="730"/>
    </location>
</feature>
<feature type="compositionally biased region" description="Basic and acidic residues" evidence="3">
    <location>
        <begin position="743"/>
        <end position="897"/>
    </location>
</feature>
<sequence length="897" mass="104269">MSSSRSQSPETPKAASEEREEEEKESSEQPDTPKTSSEKSASRSQSPRESREVSQETETSENQEKIKEKDDGDDQPGTPNSYRSRETSPAPKRSKETRESESPEKSPVRSRSPRRSSARSPSRSPRRRRERSSERKQSEEPAPLPEKKKKEPLDILRTRTGGAYIPPAKLRLMQQQISDKQSEQYQRMNWERMKKKIHGLVNRVNAKNLVQIVRELLQENVIRSKGLLCRDIIQAQAFSPGFSNVYAALAAVINSKFPHVGELLLRRLIVQFKRSFRRNDRGVTVNVIKFIAHLINQQVAHEVLALEIMILMLEEPTDDSVEVAIAFLKECGAKLLEIAPAALNSVYDRLRAILMETERSENALDRRIQYMIETAMQIRKDKFAAYPAVIEDLDLIEEEDQIIHTLNLEDAVDPENGLNVFKLDPEFEKNEEVYEEIRKEIIGNADISDEDGGDELDDEEEGSDVEEAPKKTTEIIDNTDQNLTAFRREVYLTMQSSLDYQEAAHKLLKMKIPDSMQNELCAMLVDCCAQQRTYERFYGMLIERFCRLRLEYQQYFEKLCQDTYSTIHRIDITKLRNLARLIAHLLSTDAIDWKILADMKMTEEDTTSSGRIYIKYIFNELVEAMGMVKLHSRVTDPTLAHCFVGLFPRTNPNSARFSINFFTMIGLGGLTLELREWLAKGLKKKKGMLDQLKAESSSDSSSSSDSSDSSDSSDSDDSSDSSSDSSSSSESEPEPPKKKKKKNSEESSKKKEKENIGRRDRGDKRAERHRDQSVENKDKDRRRRQDSDENRRPERGDDRKDRSKDRRRQDSDDEDRKGRERREDSGERRRGDRDRRDRNKDQEDHREDRRDRSKDREDRRDRRRHDSDDDRKTRRDRSEERGGRRREVESDDRRRRR</sequence>
<protein>
    <recommendedName>
        <fullName>Pre-mRNA-splicing factor CWC22 homolog</fullName>
    </recommendedName>
    <alternativeName>
        <fullName>Lethal protein 858</fullName>
    </alternativeName>
    <alternativeName>
        <fullName>Nucampholin</fullName>
    </alternativeName>
</protein>
<dbReference type="EMBL" id="U19615">
    <property type="protein sequence ID" value="AAB51351.1"/>
    <property type="molecule type" value="mRNA"/>
</dbReference>
<dbReference type="EMBL" id="BX284602">
    <property type="protein sequence ID" value="CAB04256.1"/>
    <property type="molecule type" value="Genomic_DNA"/>
</dbReference>
<dbReference type="PIR" id="T21688">
    <property type="entry name" value="T21688"/>
</dbReference>
<dbReference type="RefSeq" id="NP_496363.1">
    <property type="nucleotide sequence ID" value="NM_063962.9"/>
</dbReference>
<dbReference type="SMR" id="Q17336"/>
<dbReference type="BioGRID" id="39999">
    <property type="interactions" value="2"/>
</dbReference>
<dbReference type="DIP" id="DIP-26173N"/>
<dbReference type="FunCoup" id="Q17336">
    <property type="interactions" value="3102"/>
</dbReference>
<dbReference type="IntAct" id="Q17336">
    <property type="interactions" value="1"/>
</dbReference>
<dbReference type="STRING" id="6239.F33A8.1.1"/>
<dbReference type="iPTMnet" id="Q17336"/>
<dbReference type="PaxDb" id="6239-F33A8.1"/>
<dbReference type="PeptideAtlas" id="Q17336"/>
<dbReference type="EnsemblMetazoa" id="F33A8.1.1">
    <property type="protein sequence ID" value="F33A8.1.1"/>
    <property type="gene ID" value="WBGene00002957"/>
</dbReference>
<dbReference type="GeneID" id="174689"/>
<dbReference type="KEGG" id="cel:CELE_F33A8.1"/>
<dbReference type="UCSC" id="F33A8.1.1">
    <property type="organism name" value="c. elegans"/>
</dbReference>
<dbReference type="AGR" id="WB:WBGene00002957"/>
<dbReference type="CTD" id="174689"/>
<dbReference type="WormBase" id="F33A8.1">
    <property type="protein sequence ID" value="CE17753"/>
    <property type="gene ID" value="WBGene00002957"/>
    <property type="gene designation" value="let-858"/>
</dbReference>
<dbReference type="eggNOG" id="KOG2140">
    <property type="taxonomic scope" value="Eukaryota"/>
</dbReference>
<dbReference type="GeneTree" id="ENSGT00940000153458"/>
<dbReference type="HOGENOM" id="CLU_006308_1_2_1"/>
<dbReference type="InParanoid" id="Q17336"/>
<dbReference type="OMA" id="ILTEDMR"/>
<dbReference type="OrthoDB" id="1924287at2759"/>
<dbReference type="PhylomeDB" id="Q17336"/>
<dbReference type="Reactome" id="R-CEL-72163">
    <property type="pathway name" value="mRNA Splicing - Major Pathway"/>
</dbReference>
<dbReference type="PRO" id="PR:Q17336"/>
<dbReference type="Proteomes" id="UP000001940">
    <property type="component" value="Chromosome II"/>
</dbReference>
<dbReference type="Bgee" id="WBGene00002957">
    <property type="expression patterns" value="Expressed in germ line (C elegans) and 4 other cell types or tissues"/>
</dbReference>
<dbReference type="GO" id="GO:0071013">
    <property type="term" value="C:catalytic step 2 spliceosome"/>
    <property type="evidence" value="ECO:0000318"/>
    <property type="project" value="GO_Central"/>
</dbReference>
<dbReference type="GO" id="GO:0000785">
    <property type="term" value="C:chromatin"/>
    <property type="evidence" value="ECO:0000314"/>
    <property type="project" value="WormBase"/>
</dbReference>
<dbReference type="GO" id="GO:0043073">
    <property type="term" value="C:germ cell nucleus"/>
    <property type="evidence" value="ECO:0000314"/>
    <property type="project" value="WormBase"/>
</dbReference>
<dbReference type="GO" id="GO:0016607">
    <property type="term" value="C:nuclear speck"/>
    <property type="evidence" value="ECO:0007669"/>
    <property type="project" value="UniProtKB-SubCell"/>
</dbReference>
<dbReference type="GO" id="GO:0005654">
    <property type="term" value="C:nucleoplasm"/>
    <property type="evidence" value="ECO:0000314"/>
    <property type="project" value="WormBase"/>
</dbReference>
<dbReference type="GO" id="GO:0005634">
    <property type="term" value="C:nucleus"/>
    <property type="evidence" value="ECO:0000314"/>
    <property type="project" value="WormBase"/>
</dbReference>
<dbReference type="GO" id="GO:0005681">
    <property type="term" value="C:spliceosomal complex"/>
    <property type="evidence" value="ECO:0000250"/>
    <property type="project" value="UniProtKB"/>
</dbReference>
<dbReference type="GO" id="GO:0003723">
    <property type="term" value="F:RNA binding"/>
    <property type="evidence" value="ECO:0000250"/>
    <property type="project" value="UniProtKB"/>
</dbReference>
<dbReference type="GO" id="GO:0030154">
    <property type="term" value="P:cell differentiation"/>
    <property type="evidence" value="ECO:0000315"/>
    <property type="project" value="WormBase"/>
</dbReference>
<dbReference type="GO" id="GO:0007369">
    <property type="term" value="P:gastrulation"/>
    <property type="evidence" value="ECO:0000315"/>
    <property type="project" value="WormBase"/>
</dbReference>
<dbReference type="GO" id="GO:0042078">
    <property type="term" value="P:germ-line stem cell division"/>
    <property type="evidence" value="ECO:0000315"/>
    <property type="project" value="WormBase"/>
</dbReference>
<dbReference type="GO" id="GO:0000398">
    <property type="term" value="P:mRNA splicing, via spliceosome"/>
    <property type="evidence" value="ECO:0000318"/>
    <property type="project" value="GO_Central"/>
</dbReference>
<dbReference type="FunFam" id="1.25.40.180:FF:000004">
    <property type="entry name" value="pre-mRNA-splicing factor CWC22 homolog"/>
    <property type="match status" value="1"/>
</dbReference>
<dbReference type="Gene3D" id="1.25.40.180">
    <property type="match status" value="1"/>
</dbReference>
<dbReference type="InterPro" id="IPR016024">
    <property type="entry name" value="ARM-type_fold"/>
</dbReference>
<dbReference type="InterPro" id="IPR050781">
    <property type="entry name" value="CWC22_splicing_factor"/>
</dbReference>
<dbReference type="InterPro" id="IPR003891">
    <property type="entry name" value="Initiation_fac_eIF4g_MI"/>
</dbReference>
<dbReference type="InterPro" id="IPR003890">
    <property type="entry name" value="MIF4G-like_typ-3"/>
</dbReference>
<dbReference type="PANTHER" id="PTHR18034">
    <property type="entry name" value="CELL CYCLE CONTROL PROTEIN CWF22-RELATED"/>
    <property type="match status" value="1"/>
</dbReference>
<dbReference type="PANTHER" id="PTHR18034:SF3">
    <property type="entry name" value="PRE-MRNA-SPLICING FACTOR CWC22 HOMOLOG"/>
    <property type="match status" value="1"/>
</dbReference>
<dbReference type="Pfam" id="PF02847">
    <property type="entry name" value="MA3"/>
    <property type="match status" value="1"/>
</dbReference>
<dbReference type="Pfam" id="PF02854">
    <property type="entry name" value="MIF4G"/>
    <property type="match status" value="1"/>
</dbReference>
<dbReference type="SMART" id="SM00544">
    <property type="entry name" value="MA3"/>
    <property type="match status" value="1"/>
</dbReference>
<dbReference type="SMART" id="SM00543">
    <property type="entry name" value="MIF4G"/>
    <property type="match status" value="1"/>
</dbReference>
<dbReference type="SUPFAM" id="SSF48371">
    <property type="entry name" value="ARM repeat"/>
    <property type="match status" value="1"/>
</dbReference>
<dbReference type="PROSITE" id="PS51366">
    <property type="entry name" value="MI"/>
    <property type="match status" value="1"/>
</dbReference>
<name>CWC22_CAEEL</name>
<proteinExistence type="evidence at transcript level"/>
<keyword id="KW-0507">mRNA processing</keyword>
<keyword id="KW-0508">mRNA splicing</keyword>
<keyword id="KW-0539">Nucleus</keyword>
<keyword id="KW-1185">Reference proteome</keyword>
<organism>
    <name type="scientific">Caenorhabditis elegans</name>
    <dbReference type="NCBI Taxonomy" id="6239"/>
    <lineage>
        <taxon>Eukaryota</taxon>
        <taxon>Metazoa</taxon>
        <taxon>Ecdysozoa</taxon>
        <taxon>Nematoda</taxon>
        <taxon>Chromadorea</taxon>
        <taxon>Rhabditida</taxon>
        <taxon>Rhabditina</taxon>
        <taxon>Rhabditomorpha</taxon>
        <taxon>Rhabditoidea</taxon>
        <taxon>Rhabditidae</taxon>
        <taxon>Peloderinae</taxon>
        <taxon>Caenorhabditis</taxon>
    </lineage>
</organism>
<comment type="function">
    <text evidence="1 5 6">Required for pre-mRNA splicing and for exon-junction complex (EJC) assembly. Hinders EIF4A3 from non-specifically binding RNA and escorts it to the splicing machinery to promote EJC assembly on mature mRNAs. Through its role in EJC assembly, required for nonsense-mediated mRNA decay (By similarity). Plays a role in the nuclear retention of unspliced mRNAs (PubMed:23149939). Plays a role in sex determination (PubMed:23149939). Required for early embryogenesis and tissue differentiation.</text>
</comment>
<comment type="subcellular location">
    <subcellularLocation>
        <location evidence="6">Nucleus</location>
    </subcellularLocation>
    <subcellularLocation>
        <location evidence="1">Nucleus speckle</location>
    </subcellularLocation>
</comment>
<comment type="tissue specificity">
    <text evidence="4">Expressed in germ cells, oocytes, and sperm cells.</text>
</comment>
<comment type="developmental stage">
    <text evidence="6">Expressed ubiquitously throughout development.</text>
</comment>
<comment type="disruption phenotype">
    <text evidence="5">RNAi-mediated knockdown results in germline masculinization and the accumulation of unspliced mRNAs in the cytoplasm.</text>
</comment>
<comment type="similarity">
    <text evidence="7">Belongs to the CWC22 family.</text>
</comment>
<reference key="1">
    <citation type="journal article" date="1997" name="Genetics">
        <title>Distinct requirements for somatic and germline expression of a generally expressed Caernorhabditis elegans gene.</title>
        <authorList>
            <person name="Kelly W.G."/>
            <person name="Xu S."/>
            <person name="Montgomery M.K."/>
            <person name="Fire A."/>
        </authorList>
    </citation>
    <scope>NUCLEOTIDE SEQUENCE [MRNA]</scope>
    <scope>FUNCTION</scope>
    <scope>SUBCELLULAR LOCATION</scope>
    <scope>DEVELOPMENTAL STAGE</scope>
    <source>
        <strain>Bristol N2</strain>
    </source>
</reference>
<reference key="2">
    <citation type="journal article" date="1998" name="Science">
        <title>Genome sequence of the nematode C. elegans: a platform for investigating biology.</title>
        <authorList>
            <consortium name="The C. elegans sequencing consortium"/>
        </authorList>
    </citation>
    <scope>NUCLEOTIDE SEQUENCE [LARGE SCALE GENOMIC DNA]</scope>
    <source>
        <strain>Bristol N2</strain>
    </source>
</reference>
<reference key="3">
    <citation type="journal article" date="2003" name="Mol. Cell. Biol.">
        <title>Telomeric position effect variegation in Saccharomyces cerevisiae by Caenorhabditis elegans linker histones suggests a mechanistic connection between germ line and telomeric silencing.</title>
        <authorList>
            <person name="Jedrusik M.A."/>
            <person name="Schulze E."/>
        </authorList>
    </citation>
    <scope>TISSUE SPECIFICITY</scope>
</reference>
<reference key="4">
    <citation type="journal article" date="2013" name="Mol. Cell. Biol.">
        <title>A specific set of exon junction complex subunits is required for the nuclear retention of unspliced RNAs in Caenorhabditis elegans.</title>
        <authorList>
            <person name="Shiimori M."/>
            <person name="Inoue K."/>
            <person name="Sakamoto H."/>
        </authorList>
    </citation>
    <scope>FUNCTION</scope>
    <scope>DISRUPTION PHENOTYPE</scope>
</reference>
<evidence type="ECO:0000250" key="1"/>
<evidence type="ECO:0000255" key="2">
    <source>
        <dbReference type="PROSITE-ProRule" id="PRU00698"/>
    </source>
</evidence>
<evidence type="ECO:0000256" key="3">
    <source>
        <dbReference type="SAM" id="MobiDB-lite"/>
    </source>
</evidence>
<evidence type="ECO:0000269" key="4">
    <source>
    </source>
</evidence>
<evidence type="ECO:0000269" key="5">
    <source>
    </source>
</evidence>
<evidence type="ECO:0000269" key="6">
    <source>
    </source>
</evidence>
<evidence type="ECO:0000305" key="7"/>
<evidence type="ECO:0000312" key="8">
    <source>
        <dbReference type="WormBase" id="F33A8.1"/>
    </source>
</evidence>
<gene>
    <name evidence="8" type="primary">let-858</name>
    <name evidence="8" type="ORF">F33A8.1</name>
</gene>
<accession>Q17336</accession>